<reference key="1">
    <citation type="journal article" date="2005" name="Nucleic Acids Res.">
        <title>The genome sequence of Xanthomonas oryzae pathovar oryzae KACC10331, the bacterial blight pathogen of rice.</title>
        <authorList>
            <person name="Lee B.-M."/>
            <person name="Park Y.-J."/>
            <person name="Park D.-S."/>
            <person name="Kang H.-W."/>
            <person name="Kim J.-G."/>
            <person name="Song E.-S."/>
            <person name="Park I.-C."/>
            <person name="Yoon U.-H."/>
            <person name="Hahn J.-H."/>
            <person name="Koo B.-S."/>
            <person name="Lee G.-B."/>
            <person name="Kim H."/>
            <person name="Park H.-S."/>
            <person name="Yoon K.-O."/>
            <person name="Kim J.-H."/>
            <person name="Jung C.-H."/>
            <person name="Koh N.-H."/>
            <person name="Seo J.-S."/>
            <person name="Go S.-J."/>
        </authorList>
    </citation>
    <scope>NUCLEOTIDE SEQUENCE [LARGE SCALE GENOMIC DNA]</scope>
    <source>
        <strain>KACC10331 / KXO85</strain>
    </source>
</reference>
<accession>Q5GWU7</accession>
<evidence type="ECO:0000255" key="1">
    <source>
        <dbReference type="HAMAP-Rule" id="MF_01333"/>
    </source>
</evidence>
<evidence type="ECO:0000305" key="2"/>
<name>RL5_XANOR</name>
<comment type="function">
    <text evidence="1">This is one of the proteins that bind and probably mediate the attachment of the 5S RNA into the large ribosomal subunit, where it forms part of the central protuberance. In the 70S ribosome it contacts protein S13 of the 30S subunit (bridge B1b), connecting the 2 subunits; this bridge is implicated in subunit movement. Contacts the P site tRNA; the 5S rRNA and some of its associated proteins might help stabilize positioning of ribosome-bound tRNAs.</text>
</comment>
<comment type="subunit">
    <text evidence="1">Part of the 50S ribosomal subunit; part of the 5S rRNA/L5/L18/L25 subcomplex. Contacts the 5S rRNA and the P site tRNA. Forms a bridge to the 30S subunit in the 70S ribosome.</text>
</comment>
<comment type="similarity">
    <text evidence="1">Belongs to the universal ribosomal protein uL5 family.</text>
</comment>
<proteinExistence type="inferred from homology"/>
<protein>
    <recommendedName>
        <fullName evidence="1">Large ribosomal subunit protein uL5</fullName>
    </recommendedName>
    <alternativeName>
        <fullName evidence="2">50S ribosomal protein L5</fullName>
    </alternativeName>
</protein>
<feature type="chain" id="PRO_0000243088" description="Large ribosomal subunit protein uL5">
    <location>
        <begin position="1"/>
        <end position="180"/>
    </location>
</feature>
<dbReference type="EMBL" id="AE013598">
    <property type="protein sequence ID" value="AAW76824.1"/>
    <property type="molecule type" value="Genomic_DNA"/>
</dbReference>
<dbReference type="SMR" id="Q5GWU7"/>
<dbReference type="STRING" id="291331.XOO3570"/>
<dbReference type="KEGG" id="xoo:XOO3570"/>
<dbReference type="HOGENOM" id="CLU_061015_2_1_6"/>
<dbReference type="Proteomes" id="UP000006735">
    <property type="component" value="Chromosome"/>
</dbReference>
<dbReference type="GO" id="GO:1990904">
    <property type="term" value="C:ribonucleoprotein complex"/>
    <property type="evidence" value="ECO:0007669"/>
    <property type="project" value="UniProtKB-KW"/>
</dbReference>
<dbReference type="GO" id="GO:0005840">
    <property type="term" value="C:ribosome"/>
    <property type="evidence" value="ECO:0007669"/>
    <property type="project" value="UniProtKB-KW"/>
</dbReference>
<dbReference type="GO" id="GO:0019843">
    <property type="term" value="F:rRNA binding"/>
    <property type="evidence" value="ECO:0007669"/>
    <property type="project" value="UniProtKB-UniRule"/>
</dbReference>
<dbReference type="GO" id="GO:0003735">
    <property type="term" value="F:structural constituent of ribosome"/>
    <property type="evidence" value="ECO:0007669"/>
    <property type="project" value="InterPro"/>
</dbReference>
<dbReference type="GO" id="GO:0000049">
    <property type="term" value="F:tRNA binding"/>
    <property type="evidence" value="ECO:0007669"/>
    <property type="project" value="UniProtKB-UniRule"/>
</dbReference>
<dbReference type="GO" id="GO:0006412">
    <property type="term" value="P:translation"/>
    <property type="evidence" value="ECO:0007669"/>
    <property type="project" value="UniProtKB-UniRule"/>
</dbReference>
<dbReference type="FunFam" id="3.30.1440.10:FF:000001">
    <property type="entry name" value="50S ribosomal protein L5"/>
    <property type="match status" value="1"/>
</dbReference>
<dbReference type="Gene3D" id="3.30.1440.10">
    <property type="match status" value="1"/>
</dbReference>
<dbReference type="HAMAP" id="MF_01333_B">
    <property type="entry name" value="Ribosomal_uL5_B"/>
    <property type="match status" value="1"/>
</dbReference>
<dbReference type="InterPro" id="IPR002132">
    <property type="entry name" value="Ribosomal_uL5"/>
</dbReference>
<dbReference type="InterPro" id="IPR020930">
    <property type="entry name" value="Ribosomal_uL5_bac-type"/>
</dbReference>
<dbReference type="InterPro" id="IPR031309">
    <property type="entry name" value="Ribosomal_uL5_C"/>
</dbReference>
<dbReference type="InterPro" id="IPR020929">
    <property type="entry name" value="Ribosomal_uL5_CS"/>
</dbReference>
<dbReference type="InterPro" id="IPR022803">
    <property type="entry name" value="Ribosomal_uL5_dom_sf"/>
</dbReference>
<dbReference type="InterPro" id="IPR031310">
    <property type="entry name" value="Ribosomal_uL5_N"/>
</dbReference>
<dbReference type="NCBIfam" id="NF000585">
    <property type="entry name" value="PRK00010.1"/>
    <property type="match status" value="1"/>
</dbReference>
<dbReference type="PANTHER" id="PTHR11994">
    <property type="entry name" value="60S RIBOSOMAL PROTEIN L11-RELATED"/>
    <property type="match status" value="1"/>
</dbReference>
<dbReference type="Pfam" id="PF00281">
    <property type="entry name" value="Ribosomal_L5"/>
    <property type="match status" value="1"/>
</dbReference>
<dbReference type="Pfam" id="PF00673">
    <property type="entry name" value="Ribosomal_L5_C"/>
    <property type="match status" value="1"/>
</dbReference>
<dbReference type="PIRSF" id="PIRSF002161">
    <property type="entry name" value="Ribosomal_L5"/>
    <property type="match status" value="1"/>
</dbReference>
<dbReference type="SUPFAM" id="SSF55282">
    <property type="entry name" value="RL5-like"/>
    <property type="match status" value="1"/>
</dbReference>
<dbReference type="PROSITE" id="PS00358">
    <property type="entry name" value="RIBOSOMAL_L5"/>
    <property type="match status" value="1"/>
</dbReference>
<gene>
    <name evidence="1" type="primary">rplE</name>
    <name type="ordered locus">XOO3570</name>
</gene>
<sequence length="180" mass="20130">MNTRLEKFYKENVVPALMKEFGYTNPMEVPKLVKVTLNMGVGEAASNKKILENAVADMSKISGQKPVVTKSRVSVASFKIRDGWPIGCKTTLRRAKMYEFLDRLINISLPRVRDFRGVSGRSFDGRGNFNMGVKEQIIFPEIDFDAVDAIRGMDIAVTTTAKTDAEAKALLAAFKFPFRN</sequence>
<keyword id="KW-1185">Reference proteome</keyword>
<keyword id="KW-0687">Ribonucleoprotein</keyword>
<keyword id="KW-0689">Ribosomal protein</keyword>
<keyword id="KW-0694">RNA-binding</keyword>
<keyword id="KW-0699">rRNA-binding</keyword>
<keyword id="KW-0820">tRNA-binding</keyword>
<organism>
    <name type="scientific">Xanthomonas oryzae pv. oryzae (strain KACC10331 / KXO85)</name>
    <dbReference type="NCBI Taxonomy" id="291331"/>
    <lineage>
        <taxon>Bacteria</taxon>
        <taxon>Pseudomonadati</taxon>
        <taxon>Pseudomonadota</taxon>
        <taxon>Gammaproteobacteria</taxon>
        <taxon>Lysobacterales</taxon>
        <taxon>Lysobacteraceae</taxon>
        <taxon>Xanthomonas</taxon>
    </lineage>
</organism>